<proteinExistence type="evidence at transcript level"/>
<organism>
    <name type="scientific">Rattus norvegicus</name>
    <name type="common">Rat</name>
    <dbReference type="NCBI Taxonomy" id="10116"/>
    <lineage>
        <taxon>Eukaryota</taxon>
        <taxon>Metazoa</taxon>
        <taxon>Chordata</taxon>
        <taxon>Craniata</taxon>
        <taxon>Vertebrata</taxon>
        <taxon>Euteleostomi</taxon>
        <taxon>Mammalia</taxon>
        <taxon>Eutheria</taxon>
        <taxon>Euarchontoglires</taxon>
        <taxon>Glires</taxon>
        <taxon>Rodentia</taxon>
        <taxon>Myomorpha</taxon>
        <taxon>Muroidea</taxon>
        <taxon>Muridae</taxon>
        <taxon>Murinae</taxon>
        <taxon>Rattus</taxon>
    </lineage>
</organism>
<reference key="1">
    <citation type="journal article" date="2004" name="Genome Res.">
        <title>The status, quality, and expansion of the NIH full-length cDNA project: the Mammalian Gene Collection (MGC).</title>
        <authorList>
            <consortium name="The MGC Project Team"/>
        </authorList>
    </citation>
    <scope>NUCLEOTIDE SEQUENCE [LARGE SCALE MRNA]</scope>
    <source>
        <tissue>Testis</tissue>
    </source>
</reference>
<accession>Q5XIL2</accession>
<gene>
    <name type="primary">Pi4k2b</name>
</gene>
<comment type="function">
    <text evidence="1">Together with PI4K2A and the type III PI4Ks (PIK4CA and PIK4CB) it contributes to the overall PI4-kinase activity of the cell. This contribution may be especially significant in plasma membrane, endosomal and Golgi compartments. The phosphorylation of phosphatidylinositol (PI) to PI4P is the first committed step in the generation of phosphatidylinositol 4,5-bisphosphate (PIP2), a precursor of the second messenger inositol 1,4,5-trisphosphate (InsP3). Contributes to the production of InsP3 in stimulated cells and is likely to be involved in the regulation of vesicular trafficking.</text>
</comment>
<comment type="catalytic activity">
    <reaction evidence="1">
        <text>a 1,2-diacyl-sn-glycero-3-phospho-(1D-myo-inositol) + ATP = a 1,2-diacyl-sn-glycero-3-phospho-(1D-myo-inositol 4-phosphate) + ADP + H(+)</text>
        <dbReference type="Rhea" id="RHEA:19877"/>
        <dbReference type="ChEBI" id="CHEBI:15378"/>
        <dbReference type="ChEBI" id="CHEBI:30616"/>
        <dbReference type="ChEBI" id="CHEBI:57880"/>
        <dbReference type="ChEBI" id="CHEBI:58178"/>
        <dbReference type="ChEBI" id="CHEBI:456216"/>
        <dbReference type="EC" id="2.7.1.67"/>
    </reaction>
    <physiologicalReaction direction="left-to-right" evidence="1">
        <dbReference type="Rhea" id="RHEA:19878"/>
    </physiologicalReaction>
</comment>
<comment type="subcellular location">
    <subcellularLocation>
        <location evidence="1">Cytoplasm</location>
        <location evidence="1">Cytosol</location>
    </subcellularLocation>
    <subcellularLocation>
        <location evidence="1">Golgi apparatus membrane</location>
        <topology evidence="1">Peripheral membrane protein</topology>
    </subcellularLocation>
    <subcellularLocation>
        <location evidence="1">Endoplasmic reticulum membrane</location>
    </subcellularLocation>
    <subcellularLocation>
        <location evidence="1">Cell membrane</location>
    </subcellularLocation>
    <subcellularLocation>
        <location evidence="1">Early endosome membrane</location>
    </subcellularLocation>
    <text evidence="1">Mainly cytosolic, association with membranes of the Golgi, endoplasmic and plasma membrane is stimulated by active RAC1. Association with early endosomes has not been confirmed.</text>
</comment>
<comment type="similarity">
    <text evidence="5">Belongs to the PI3/PI4-kinase family. Type II PI4K subfamily.</text>
</comment>
<sequence>MPEPPRDIMAEACEATRPSEDEDEEREPLLPRVAWAQPRRGAPGSAVRLQADQGAAVLREPATEEPPVVSEDRSISASLSTELDRTRNAVSETNTFLEDPEFADVVLKAEQAIEIGVFPERISQGSSGSYFVKDSKRTIIGVFKPKSEEPYGQLNPKWTKYVHKVCCPCCFGRGCLLPNQGYLSEAGAYLVDTKLQLGIVPKTKVVWLVSETFNYSAIDRAKSRGKKYALEKVPKVGRKFHRIGLPPKIGSFQLFVKDYKEAEYWLRRFEAEPLPENIRKQFQSQFERLVILDYIIRNTDRGNDNWLVKYDEMKYAKKIESEESNWIDDKQLLIRIAAIDNGLAFPFKHPDEWRAYPFHWAWLPQAKVPFSEETRNLILPFISDMNFVQDLCEDLYELFKTDKGFDRAAFESQMSVMRGQILNLTQALRDGKSPMQLAQMPCVIVECSKSGGQGRVVHLGSSFTQTVHCRKPFFSSW</sequence>
<keyword id="KW-0067">ATP-binding</keyword>
<keyword id="KW-1003">Cell membrane</keyword>
<keyword id="KW-0963">Cytoplasm</keyword>
<keyword id="KW-0256">Endoplasmic reticulum</keyword>
<keyword id="KW-0967">Endosome</keyword>
<keyword id="KW-0333">Golgi apparatus</keyword>
<keyword id="KW-0418">Kinase</keyword>
<keyword id="KW-0443">Lipid metabolism</keyword>
<keyword id="KW-0472">Membrane</keyword>
<keyword id="KW-0547">Nucleotide-binding</keyword>
<keyword id="KW-0597">Phosphoprotein</keyword>
<keyword id="KW-1185">Reference proteome</keyword>
<keyword id="KW-0808">Transferase</keyword>
<protein>
    <recommendedName>
        <fullName>Phosphatidylinositol 4-kinase type 2-beta</fullName>
        <ecNumber evidence="1">2.7.1.67</ecNumber>
    </recommendedName>
    <alternativeName>
        <fullName>Phosphatidylinositol 4-kinase type II-beta</fullName>
    </alternativeName>
</protein>
<feature type="chain" id="PRO_0000285166" description="Phosphatidylinositol 4-kinase type 2-beta">
    <location>
        <begin position="1"/>
        <end position="477"/>
    </location>
</feature>
<feature type="domain" description="PI3K/PI4K catalytic" evidence="3">
    <location>
        <begin position="116"/>
        <end position="447"/>
    </location>
</feature>
<feature type="region of interest" description="Disordered" evidence="4">
    <location>
        <begin position="1"/>
        <end position="80"/>
    </location>
</feature>
<feature type="region of interest" description="G-loop" evidence="3">
    <location>
        <begin position="122"/>
        <end position="128"/>
    </location>
</feature>
<feature type="region of interest" description="Important for substrate binding" evidence="2">
    <location>
        <begin position="149"/>
        <end position="151"/>
    </location>
</feature>
<feature type="region of interest" description="Important for interaction with membranes" evidence="2">
    <location>
        <begin position="157"/>
        <end position="170"/>
    </location>
</feature>
<feature type="region of interest" description="Important for interaction with membranes" evidence="2">
    <location>
        <begin position="260"/>
        <end position="268"/>
    </location>
</feature>
<feature type="region of interest" description="Catalytic loop" evidence="3">
    <location>
        <begin position="297"/>
        <end position="305"/>
    </location>
</feature>
<feature type="region of interest" description="Activation loop" evidence="3">
    <location>
        <begin position="338"/>
        <end position="358"/>
    </location>
</feature>
<feature type="region of interest" description="Important for interaction with membranes" evidence="2">
    <location>
        <begin position="353"/>
        <end position="362"/>
    </location>
</feature>
<feature type="binding site" evidence="1">
    <location>
        <position position="129"/>
    </location>
    <ligand>
        <name>ATP</name>
        <dbReference type="ChEBI" id="CHEBI:30616"/>
    </ligand>
</feature>
<feature type="binding site" evidence="1">
    <location>
        <position position="144"/>
    </location>
    <ligand>
        <name>ATP</name>
        <dbReference type="ChEBI" id="CHEBI:30616"/>
    </ligand>
</feature>
<feature type="binding site" evidence="1">
    <location>
        <begin position="253"/>
        <end position="256"/>
    </location>
    <ligand>
        <name>ATP</name>
        <dbReference type="ChEBI" id="CHEBI:30616"/>
    </ligand>
</feature>
<feature type="binding site" evidence="1">
    <location>
        <begin position="267"/>
        <end position="268"/>
    </location>
    <ligand>
        <name>ATP</name>
        <dbReference type="ChEBI" id="CHEBI:30616"/>
    </ligand>
</feature>
<feature type="binding site" evidence="1">
    <location>
        <position position="340"/>
    </location>
    <ligand>
        <name>ATP</name>
        <dbReference type="ChEBI" id="CHEBI:30616"/>
    </ligand>
</feature>
<feature type="modified residue" description="Phosphoserine" evidence="1">
    <location>
        <position position="45"/>
    </location>
</feature>
<dbReference type="EC" id="2.7.1.67" evidence="1"/>
<dbReference type="EMBL" id="BC083668">
    <property type="protein sequence ID" value="AAH83668.1"/>
    <property type="molecule type" value="mRNA"/>
</dbReference>
<dbReference type="RefSeq" id="NP_001005883.1">
    <property type="nucleotide sequence ID" value="NM_001005883.1"/>
</dbReference>
<dbReference type="SMR" id="Q5XIL2"/>
<dbReference type="FunCoup" id="Q5XIL2">
    <property type="interactions" value="2093"/>
</dbReference>
<dbReference type="STRING" id="10116.ENSRNOP00000005349"/>
<dbReference type="PhosphoSitePlus" id="Q5XIL2"/>
<dbReference type="SwissPalm" id="Q5XIL2"/>
<dbReference type="PaxDb" id="10116-ENSRNOP00000005349"/>
<dbReference type="Ensembl" id="ENSRNOT00000005349.6">
    <property type="protein sequence ID" value="ENSRNOP00000005349.3"/>
    <property type="gene ID" value="ENSRNOG00000003924.7"/>
</dbReference>
<dbReference type="GeneID" id="305419"/>
<dbReference type="KEGG" id="rno:305419"/>
<dbReference type="AGR" id="RGD:1359515"/>
<dbReference type="CTD" id="55300"/>
<dbReference type="RGD" id="1359515">
    <property type="gene designation" value="Pi4k2b"/>
</dbReference>
<dbReference type="eggNOG" id="KOG2381">
    <property type="taxonomic scope" value="Eukaryota"/>
</dbReference>
<dbReference type="GeneTree" id="ENSGT00390000010434"/>
<dbReference type="HOGENOM" id="CLU_032516_1_0_1"/>
<dbReference type="InParanoid" id="Q5XIL2"/>
<dbReference type="OMA" id="PYAKVPF"/>
<dbReference type="OrthoDB" id="3349449at2759"/>
<dbReference type="PhylomeDB" id="Q5XIL2"/>
<dbReference type="TreeFam" id="TF314740"/>
<dbReference type="Reactome" id="R-RNO-1483248">
    <property type="pathway name" value="Synthesis of PIPs at the ER membrane"/>
</dbReference>
<dbReference type="Reactome" id="R-RNO-1660499">
    <property type="pathway name" value="Synthesis of PIPs at the plasma membrane"/>
</dbReference>
<dbReference type="Reactome" id="R-RNO-1660514">
    <property type="pathway name" value="Synthesis of PIPs at the Golgi membrane"/>
</dbReference>
<dbReference type="Reactome" id="R-RNO-1660516">
    <property type="pathway name" value="Synthesis of PIPs at the early endosome membrane"/>
</dbReference>
<dbReference type="PRO" id="PR:Q5XIL2"/>
<dbReference type="Proteomes" id="UP000002494">
    <property type="component" value="Chromosome 14"/>
</dbReference>
<dbReference type="Bgee" id="ENSRNOG00000003924">
    <property type="expression patterns" value="Expressed in duodenum and 19 other cell types or tissues"/>
</dbReference>
<dbReference type="GO" id="GO:0005829">
    <property type="term" value="C:cytosol"/>
    <property type="evidence" value="ECO:0000250"/>
    <property type="project" value="UniProtKB"/>
</dbReference>
<dbReference type="GO" id="GO:0031901">
    <property type="term" value="C:early endosome membrane"/>
    <property type="evidence" value="ECO:0000266"/>
    <property type="project" value="RGD"/>
</dbReference>
<dbReference type="GO" id="GO:0005789">
    <property type="term" value="C:endoplasmic reticulum membrane"/>
    <property type="evidence" value="ECO:0000250"/>
    <property type="project" value="UniProtKB"/>
</dbReference>
<dbReference type="GO" id="GO:0005768">
    <property type="term" value="C:endosome"/>
    <property type="evidence" value="ECO:0000318"/>
    <property type="project" value="GO_Central"/>
</dbReference>
<dbReference type="GO" id="GO:0000139">
    <property type="term" value="C:Golgi membrane"/>
    <property type="evidence" value="ECO:0000250"/>
    <property type="project" value="UniProtKB"/>
</dbReference>
<dbReference type="GO" id="GO:0005886">
    <property type="term" value="C:plasma membrane"/>
    <property type="evidence" value="ECO:0000250"/>
    <property type="project" value="UniProtKB"/>
</dbReference>
<dbReference type="GO" id="GO:0005802">
    <property type="term" value="C:trans-Golgi network"/>
    <property type="evidence" value="ECO:0000318"/>
    <property type="project" value="GO_Central"/>
</dbReference>
<dbReference type="GO" id="GO:0004430">
    <property type="term" value="F:1-phosphatidylinositol 4-kinase activity"/>
    <property type="evidence" value="ECO:0000250"/>
    <property type="project" value="UniProtKB"/>
</dbReference>
<dbReference type="GO" id="GO:0005524">
    <property type="term" value="F:ATP binding"/>
    <property type="evidence" value="ECO:0007669"/>
    <property type="project" value="UniProtKB-KW"/>
</dbReference>
<dbReference type="GO" id="GO:0007032">
    <property type="term" value="P:endosome organization"/>
    <property type="evidence" value="ECO:0000318"/>
    <property type="project" value="GO_Central"/>
</dbReference>
<dbReference type="GO" id="GO:0007030">
    <property type="term" value="P:Golgi organization"/>
    <property type="evidence" value="ECO:0000318"/>
    <property type="project" value="GO_Central"/>
</dbReference>
<dbReference type="GO" id="GO:0046854">
    <property type="term" value="P:phosphatidylinositol phosphate biosynthetic process"/>
    <property type="evidence" value="ECO:0000250"/>
    <property type="project" value="UniProtKB"/>
</dbReference>
<dbReference type="Gene3D" id="1.10.1070.20">
    <property type="match status" value="1"/>
</dbReference>
<dbReference type="InterPro" id="IPR039756">
    <property type="entry name" value="Lsb6/PI4K2"/>
</dbReference>
<dbReference type="InterPro" id="IPR000403">
    <property type="entry name" value="PI3/4_kinase_cat_dom"/>
</dbReference>
<dbReference type="PANTHER" id="PTHR12865:SF6">
    <property type="entry name" value="PHOSPHATIDYLINOSITOL 4-KINASE TYPE 2-BETA"/>
    <property type="match status" value="1"/>
</dbReference>
<dbReference type="PANTHER" id="PTHR12865">
    <property type="entry name" value="PHOSPHATIDYLINOSITOL 4-KINASE TYPE-II"/>
    <property type="match status" value="1"/>
</dbReference>
<dbReference type="Pfam" id="PF00454">
    <property type="entry name" value="PI3_PI4_kinase"/>
    <property type="match status" value="1"/>
</dbReference>
<dbReference type="PROSITE" id="PS50290">
    <property type="entry name" value="PI3_4_KINASE_3"/>
    <property type="match status" value="1"/>
</dbReference>
<name>P4K2B_RAT</name>
<evidence type="ECO:0000250" key="1">
    <source>
        <dbReference type="UniProtKB" id="Q8TCG2"/>
    </source>
</evidence>
<evidence type="ECO:0000250" key="2">
    <source>
        <dbReference type="UniProtKB" id="Q9BTU6"/>
    </source>
</evidence>
<evidence type="ECO:0000255" key="3">
    <source>
        <dbReference type="PROSITE-ProRule" id="PRU00269"/>
    </source>
</evidence>
<evidence type="ECO:0000256" key="4">
    <source>
        <dbReference type="SAM" id="MobiDB-lite"/>
    </source>
</evidence>
<evidence type="ECO:0000305" key="5"/>